<dbReference type="EMBL" id="AC004690">
    <property type="status" value="NOT_ANNOTATED_CDS"/>
    <property type="molecule type" value="Genomic_DNA"/>
</dbReference>
<dbReference type="EMBL" id="CH236947">
    <property type="protein sequence ID" value="EAL24328.1"/>
    <property type="status" value="ALT_SEQ"/>
    <property type="molecule type" value="Genomic_DNA"/>
</dbReference>
<dbReference type="EMBL" id="BC157828">
    <property type="protein sequence ID" value="AAI57829.1"/>
    <property type="molecule type" value="mRNA"/>
</dbReference>
<dbReference type="EMBL" id="BC171809">
    <property type="protein sequence ID" value="AAI71809.1"/>
    <property type="molecule type" value="mRNA"/>
</dbReference>
<dbReference type="CCDS" id="CCDS47694.1"/>
<dbReference type="RefSeq" id="NP_001129474.1">
    <property type="nucleotide sequence ID" value="NM_001136002.2"/>
</dbReference>
<dbReference type="FunCoup" id="B2RXF0">
    <property type="interactions" value="2"/>
</dbReference>
<dbReference type="STRING" id="9606.ENSP00000395244"/>
<dbReference type="iPTMnet" id="B2RXF0"/>
<dbReference type="PhosphoSitePlus" id="B2RXF0"/>
<dbReference type="BioMuta" id="TMEM229A"/>
<dbReference type="jPOST" id="B2RXF0"/>
<dbReference type="MassIVE" id="B2RXF0"/>
<dbReference type="PaxDb" id="9606-ENSP00000395244"/>
<dbReference type="PeptideAtlas" id="B2RXF0"/>
<dbReference type="ProteomicsDB" id="3460"/>
<dbReference type="Antibodypedia" id="55409">
    <property type="antibodies" value="49 antibodies from 11 providers"/>
</dbReference>
<dbReference type="DNASU" id="730130"/>
<dbReference type="Ensembl" id="ENST00000455783.3">
    <property type="protein sequence ID" value="ENSP00000395244.1"/>
    <property type="gene ID" value="ENSG00000234224.3"/>
</dbReference>
<dbReference type="GeneID" id="730130"/>
<dbReference type="KEGG" id="hsa:730130"/>
<dbReference type="MANE-Select" id="ENST00000455783.3">
    <property type="protein sequence ID" value="ENSP00000395244.1"/>
    <property type="RefSeq nucleotide sequence ID" value="NM_001136002.2"/>
    <property type="RefSeq protein sequence ID" value="NP_001129474.1"/>
</dbReference>
<dbReference type="UCSC" id="uc011kob.3">
    <property type="organism name" value="human"/>
</dbReference>
<dbReference type="AGR" id="HGNC:37279"/>
<dbReference type="CTD" id="730130"/>
<dbReference type="DisGeNET" id="730130"/>
<dbReference type="GeneCards" id="TMEM229A"/>
<dbReference type="HGNC" id="HGNC:37279">
    <property type="gene designation" value="TMEM229A"/>
</dbReference>
<dbReference type="HPA" id="ENSG00000234224">
    <property type="expression patterns" value="Tissue enhanced (brain, intestine, testis)"/>
</dbReference>
<dbReference type="neXtProt" id="NX_B2RXF0"/>
<dbReference type="OpenTargets" id="ENSG00000234224"/>
<dbReference type="PharmGKB" id="PA165618420"/>
<dbReference type="VEuPathDB" id="HostDB:ENSG00000234224"/>
<dbReference type="eggNOG" id="ENOG502QUNK">
    <property type="taxonomic scope" value="Eukaryota"/>
</dbReference>
<dbReference type="GeneTree" id="ENSGT00390000010899"/>
<dbReference type="HOGENOM" id="CLU_048581_0_0_1"/>
<dbReference type="InParanoid" id="B2RXF0"/>
<dbReference type="OMA" id="FHLVFYP"/>
<dbReference type="OrthoDB" id="9925611at2759"/>
<dbReference type="PAN-GO" id="B2RXF0">
    <property type="GO annotations" value="0 GO annotations based on evolutionary models"/>
</dbReference>
<dbReference type="PhylomeDB" id="B2RXF0"/>
<dbReference type="TreeFam" id="TF336481"/>
<dbReference type="PathwayCommons" id="B2RXF0"/>
<dbReference type="BioGRID-ORCS" id="730130">
    <property type="hits" value="9 hits in 1139 CRISPR screens"/>
</dbReference>
<dbReference type="GenomeRNAi" id="730130"/>
<dbReference type="Pharos" id="B2RXF0">
    <property type="development level" value="Tdark"/>
</dbReference>
<dbReference type="PRO" id="PR:B2RXF0"/>
<dbReference type="Proteomes" id="UP000005640">
    <property type="component" value="Chromosome 7"/>
</dbReference>
<dbReference type="RNAct" id="B2RXF0">
    <property type="molecule type" value="protein"/>
</dbReference>
<dbReference type="Bgee" id="ENSG00000234224">
    <property type="expression patterns" value="Expressed in duodenum and 52 other cell types or tissues"/>
</dbReference>
<dbReference type="GO" id="GO:0016020">
    <property type="term" value="C:membrane"/>
    <property type="evidence" value="ECO:0007669"/>
    <property type="project" value="UniProtKB-SubCell"/>
</dbReference>
<dbReference type="Gene3D" id="4.10.20.10">
    <property type="entry name" value="Tat domain"/>
    <property type="match status" value="1"/>
</dbReference>
<dbReference type="InterPro" id="IPR036963">
    <property type="entry name" value="Tat_dom_sf"/>
</dbReference>
<dbReference type="PANTHER" id="PTHR31746">
    <property type="entry name" value="TRANSMEMBRANE PROTEIN 229 FAMILY MEMBER"/>
    <property type="match status" value="1"/>
</dbReference>
<dbReference type="PANTHER" id="PTHR31746:SF2">
    <property type="entry name" value="TRANSMEMBRANE PROTEIN 229A"/>
    <property type="match status" value="1"/>
</dbReference>
<feature type="chain" id="PRO_0000391848" description="Transmembrane protein 229A">
    <location>
        <begin position="1"/>
        <end position="380"/>
    </location>
</feature>
<feature type="transmembrane region" description="Helical" evidence="1">
    <location>
        <begin position="51"/>
        <end position="71"/>
    </location>
</feature>
<feature type="transmembrane region" description="Helical" evidence="1">
    <location>
        <begin position="117"/>
        <end position="137"/>
    </location>
</feature>
<feature type="transmembrane region" description="Helical" evidence="1">
    <location>
        <begin position="244"/>
        <end position="264"/>
    </location>
</feature>
<feature type="transmembrane region" description="Helical" evidence="1">
    <location>
        <begin position="278"/>
        <end position="298"/>
    </location>
</feature>
<feature type="transmembrane region" description="Helical" evidence="1">
    <location>
        <begin position="310"/>
        <end position="330"/>
    </location>
</feature>
<feature type="transmembrane region" description="Helical" evidence="1">
    <location>
        <begin position="343"/>
        <end position="363"/>
    </location>
</feature>
<feature type="region of interest" description="Disordered" evidence="2">
    <location>
        <begin position="1"/>
        <end position="40"/>
    </location>
</feature>
<feature type="region of interest" description="Disordered" evidence="2">
    <location>
        <begin position="188"/>
        <end position="236"/>
    </location>
</feature>
<feature type="compositionally biased region" description="Low complexity" evidence="2">
    <location>
        <begin position="190"/>
        <end position="202"/>
    </location>
</feature>
<feature type="sequence conflict" description="In Ref. 3; AAI71809/AAI57829." evidence="3" ref="3">
    <location>
        <position position="189"/>
    </location>
</feature>
<comment type="subcellular location">
    <subcellularLocation>
        <location evidence="3">Membrane</location>
        <topology evidence="3">Multi-pass membrane protein</topology>
    </subcellularLocation>
</comment>
<comment type="similarity">
    <text evidence="3">Belongs to the TMEM229 family.</text>
</comment>
<comment type="sequence caution" evidence="3">
    <conflict type="erroneous gene model prediction">
        <sequence resource="EMBL-CDS" id="EAL24328"/>
    </conflict>
</comment>
<gene>
    <name type="primary">TMEM229A</name>
</gene>
<name>T229A_HUMAN</name>
<sequence>MAGSDVDSEGPARRGGAARRPGAPGGPGSEAAAGCPEPLSTAEAPAESATLPAWMRLYFYGMHGITLDVLVSSARRFARSPDLRMLGFSSPYRCLLHSLTHFALEKVYLQQRRCPNAFVFNFLLYPSAHVGLQTLAGQALLLSLGGGAGVAVAPGALDLALQYVLALYHCQVFLKRFLRLRYGRQRRRQQQQQQQQQQQQRRGALPVPPGARVPTAAGARRRRPRGPRGAGGAPSQGLPDLPRFLFFGMHGFLDEIFFTFFFNVLGQGDGTTSGHTSLWSFFMYGSCSFVVEKLYFHLHYSRGWGTWKRVPIYVIFIYVWELSWGLGLRTCGACSWDYSHYPLNFMGLITLMYLPGWIFLSVYQDLISNVLWRVQYVPAN</sequence>
<proteinExistence type="evidence at protein level"/>
<accession>B2RXF0</accession>
<accession>A4D0X6</accession>
<organism>
    <name type="scientific">Homo sapiens</name>
    <name type="common">Human</name>
    <dbReference type="NCBI Taxonomy" id="9606"/>
    <lineage>
        <taxon>Eukaryota</taxon>
        <taxon>Metazoa</taxon>
        <taxon>Chordata</taxon>
        <taxon>Craniata</taxon>
        <taxon>Vertebrata</taxon>
        <taxon>Euteleostomi</taxon>
        <taxon>Mammalia</taxon>
        <taxon>Eutheria</taxon>
        <taxon>Euarchontoglires</taxon>
        <taxon>Primates</taxon>
        <taxon>Haplorrhini</taxon>
        <taxon>Catarrhini</taxon>
        <taxon>Hominidae</taxon>
        <taxon>Homo</taxon>
    </lineage>
</organism>
<protein>
    <recommendedName>
        <fullName>Transmembrane protein 229A</fullName>
    </recommendedName>
</protein>
<evidence type="ECO:0000255" key="1"/>
<evidence type="ECO:0000256" key="2">
    <source>
        <dbReference type="SAM" id="MobiDB-lite"/>
    </source>
</evidence>
<evidence type="ECO:0000305" key="3"/>
<keyword id="KW-0472">Membrane</keyword>
<keyword id="KW-1267">Proteomics identification</keyword>
<keyword id="KW-1185">Reference proteome</keyword>
<keyword id="KW-0812">Transmembrane</keyword>
<keyword id="KW-1133">Transmembrane helix</keyword>
<reference key="1">
    <citation type="journal article" date="2003" name="Nature">
        <title>The DNA sequence of human chromosome 7.</title>
        <authorList>
            <person name="Hillier L.W."/>
            <person name="Fulton R.S."/>
            <person name="Fulton L.A."/>
            <person name="Graves T.A."/>
            <person name="Pepin K.H."/>
            <person name="Wagner-McPherson C."/>
            <person name="Layman D."/>
            <person name="Maas J."/>
            <person name="Jaeger S."/>
            <person name="Walker R."/>
            <person name="Wylie K."/>
            <person name="Sekhon M."/>
            <person name="Becker M.C."/>
            <person name="O'Laughlin M.D."/>
            <person name="Schaller M.E."/>
            <person name="Fewell G.A."/>
            <person name="Delehaunty K.D."/>
            <person name="Miner T.L."/>
            <person name="Nash W.E."/>
            <person name="Cordes M."/>
            <person name="Du H."/>
            <person name="Sun H."/>
            <person name="Edwards J."/>
            <person name="Bradshaw-Cordum H."/>
            <person name="Ali J."/>
            <person name="Andrews S."/>
            <person name="Isak A."/>
            <person name="Vanbrunt A."/>
            <person name="Nguyen C."/>
            <person name="Du F."/>
            <person name="Lamar B."/>
            <person name="Courtney L."/>
            <person name="Kalicki J."/>
            <person name="Ozersky P."/>
            <person name="Bielicki L."/>
            <person name="Scott K."/>
            <person name="Holmes A."/>
            <person name="Harkins R."/>
            <person name="Harris A."/>
            <person name="Strong C.M."/>
            <person name="Hou S."/>
            <person name="Tomlinson C."/>
            <person name="Dauphin-Kohlberg S."/>
            <person name="Kozlowicz-Reilly A."/>
            <person name="Leonard S."/>
            <person name="Rohlfing T."/>
            <person name="Rock S.M."/>
            <person name="Tin-Wollam A.-M."/>
            <person name="Abbott A."/>
            <person name="Minx P."/>
            <person name="Maupin R."/>
            <person name="Strowmatt C."/>
            <person name="Latreille P."/>
            <person name="Miller N."/>
            <person name="Johnson D."/>
            <person name="Murray J."/>
            <person name="Woessner J.P."/>
            <person name="Wendl M.C."/>
            <person name="Yang S.-P."/>
            <person name="Schultz B.R."/>
            <person name="Wallis J.W."/>
            <person name="Spieth J."/>
            <person name="Bieri T.A."/>
            <person name="Nelson J.O."/>
            <person name="Berkowicz N."/>
            <person name="Wohldmann P.E."/>
            <person name="Cook L.L."/>
            <person name="Hickenbotham M.T."/>
            <person name="Eldred J."/>
            <person name="Williams D."/>
            <person name="Bedell J.A."/>
            <person name="Mardis E.R."/>
            <person name="Clifton S.W."/>
            <person name="Chissoe S.L."/>
            <person name="Marra M.A."/>
            <person name="Raymond C."/>
            <person name="Haugen E."/>
            <person name="Gillett W."/>
            <person name="Zhou Y."/>
            <person name="James R."/>
            <person name="Phelps K."/>
            <person name="Iadanoto S."/>
            <person name="Bubb K."/>
            <person name="Simms E."/>
            <person name="Levy R."/>
            <person name="Clendenning J."/>
            <person name="Kaul R."/>
            <person name="Kent W.J."/>
            <person name="Furey T.S."/>
            <person name="Baertsch R.A."/>
            <person name="Brent M.R."/>
            <person name="Keibler E."/>
            <person name="Flicek P."/>
            <person name="Bork P."/>
            <person name="Suyama M."/>
            <person name="Bailey J.A."/>
            <person name="Portnoy M.E."/>
            <person name="Torrents D."/>
            <person name="Chinwalla A.T."/>
            <person name="Gish W.R."/>
            <person name="Eddy S.R."/>
            <person name="McPherson J.D."/>
            <person name="Olson M.V."/>
            <person name="Eichler E.E."/>
            <person name="Green E.D."/>
            <person name="Waterston R.H."/>
            <person name="Wilson R.K."/>
        </authorList>
    </citation>
    <scope>NUCLEOTIDE SEQUENCE [LARGE SCALE GENOMIC DNA]</scope>
</reference>
<reference key="2">
    <citation type="journal article" date="2003" name="Science">
        <title>Human chromosome 7: DNA sequence and biology.</title>
        <authorList>
            <person name="Scherer S.W."/>
            <person name="Cheung J."/>
            <person name="MacDonald J.R."/>
            <person name="Osborne L.R."/>
            <person name="Nakabayashi K."/>
            <person name="Herbrick J.-A."/>
            <person name="Carson A.R."/>
            <person name="Parker-Katiraee L."/>
            <person name="Skaug J."/>
            <person name="Khaja R."/>
            <person name="Zhang J."/>
            <person name="Hudek A.K."/>
            <person name="Li M."/>
            <person name="Haddad M."/>
            <person name="Duggan G.E."/>
            <person name="Fernandez B.A."/>
            <person name="Kanematsu E."/>
            <person name="Gentles S."/>
            <person name="Christopoulos C.C."/>
            <person name="Choufani S."/>
            <person name="Kwasnicka D."/>
            <person name="Zheng X.H."/>
            <person name="Lai Z."/>
            <person name="Nusskern D.R."/>
            <person name="Zhang Q."/>
            <person name="Gu Z."/>
            <person name="Lu F."/>
            <person name="Zeesman S."/>
            <person name="Nowaczyk M.J."/>
            <person name="Teshima I."/>
            <person name="Chitayat D."/>
            <person name="Shuman C."/>
            <person name="Weksberg R."/>
            <person name="Zackai E.H."/>
            <person name="Grebe T.A."/>
            <person name="Cox S.R."/>
            <person name="Kirkpatrick S.J."/>
            <person name="Rahman N."/>
            <person name="Friedman J.M."/>
            <person name="Heng H.H.Q."/>
            <person name="Pelicci P.G."/>
            <person name="Lo-Coco F."/>
            <person name="Belloni E."/>
            <person name="Shaffer L.G."/>
            <person name="Pober B."/>
            <person name="Morton C.C."/>
            <person name="Gusella J.F."/>
            <person name="Bruns G.A.P."/>
            <person name="Korf B.R."/>
            <person name="Quade B.J."/>
            <person name="Ligon A.H."/>
            <person name="Ferguson H."/>
            <person name="Higgins A.W."/>
            <person name="Leach N.T."/>
            <person name="Herrick S.R."/>
            <person name="Lemyre E."/>
            <person name="Farra C.G."/>
            <person name="Kim H.-G."/>
            <person name="Summers A.M."/>
            <person name="Gripp K.W."/>
            <person name="Roberts W."/>
            <person name="Szatmari P."/>
            <person name="Winsor E.J.T."/>
            <person name="Grzeschik K.-H."/>
            <person name="Teebi A."/>
            <person name="Minassian B.A."/>
            <person name="Kere J."/>
            <person name="Armengol L."/>
            <person name="Pujana M.A."/>
            <person name="Estivill X."/>
            <person name="Wilson M.D."/>
            <person name="Koop B.F."/>
            <person name="Tosi S."/>
            <person name="Moore G.E."/>
            <person name="Boright A.P."/>
            <person name="Zlotorynski E."/>
            <person name="Kerem B."/>
            <person name="Kroisel P.M."/>
            <person name="Petek E."/>
            <person name="Oscier D.G."/>
            <person name="Mould S.J."/>
            <person name="Doehner H."/>
            <person name="Doehner K."/>
            <person name="Rommens J.M."/>
            <person name="Vincent J.B."/>
            <person name="Venter J.C."/>
            <person name="Li P.W."/>
            <person name="Mural R.J."/>
            <person name="Adams M.D."/>
            <person name="Tsui L.-C."/>
        </authorList>
    </citation>
    <scope>NUCLEOTIDE SEQUENCE [LARGE SCALE GENOMIC DNA]</scope>
</reference>
<reference key="3">
    <citation type="journal article" date="2004" name="Genome Res.">
        <title>The status, quality, and expansion of the NIH full-length cDNA project: the Mammalian Gene Collection (MGC).</title>
        <authorList>
            <consortium name="The MGC Project Team"/>
        </authorList>
    </citation>
    <scope>NUCLEOTIDE SEQUENCE [LARGE SCALE MRNA]</scope>
</reference>